<reference key="1">
    <citation type="journal article" date="2006" name="Proc. Natl. Acad. Sci. U.S.A.">
        <title>Burkholderia xenovorans LB400 harbors a multi-replicon, 9.73-Mbp genome shaped for versatility.</title>
        <authorList>
            <person name="Chain P.S.G."/>
            <person name="Denef V.J."/>
            <person name="Konstantinidis K.T."/>
            <person name="Vergez L.M."/>
            <person name="Agullo L."/>
            <person name="Reyes V.L."/>
            <person name="Hauser L."/>
            <person name="Cordova M."/>
            <person name="Gomez L."/>
            <person name="Gonzalez M."/>
            <person name="Land M."/>
            <person name="Lao V."/>
            <person name="Larimer F."/>
            <person name="LiPuma J.J."/>
            <person name="Mahenthiralingam E."/>
            <person name="Malfatti S.A."/>
            <person name="Marx C.J."/>
            <person name="Parnell J.J."/>
            <person name="Ramette A."/>
            <person name="Richardson P."/>
            <person name="Seeger M."/>
            <person name="Smith D."/>
            <person name="Spilker T."/>
            <person name="Sul W.J."/>
            <person name="Tsoi T.V."/>
            <person name="Ulrich L.E."/>
            <person name="Zhulin I.B."/>
            <person name="Tiedje J.M."/>
        </authorList>
    </citation>
    <scope>NUCLEOTIDE SEQUENCE [LARGE SCALE GENOMIC DNA]</scope>
    <source>
        <strain>LB400</strain>
    </source>
</reference>
<organism>
    <name type="scientific">Paraburkholderia xenovorans (strain LB400)</name>
    <dbReference type="NCBI Taxonomy" id="266265"/>
    <lineage>
        <taxon>Bacteria</taxon>
        <taxon>Pseudomonadati</taxon>
        <taxon>Pseudomonadota</taxon>
        <taxon>Betaproteobacteria</taxon>
        <taxon>Burkholderiales</taxon>
        <taxon>Burkholderiaceae</taxon>
        <taxon>Paraburkholderia</taxon>
    </lineage>
</organism>
<gene>
    <name evidence="1" type="primary">metK</name>
    <name type="ordered locus">Bxeno_A0091</name>
    <name type="ORF">Bxe_A4371</name>
</gene>
<comment type="function">
    <text evidence="1">Catalyzes the formation of S-adenosylmethionine (AdoMet) from methionine and ATP. The overall synthetic reaction is composed of two sequential steps, AdoMet formation and the subsequent tripolyphosphate hydrolysis which occurs prior to release of AdoMet from the enzyme.</text>
</comment>
<comment type="catalytic activity">
    <reaction evidence="1">
        <text>L-methionine + ATP + H2O = S-adenosyl-L-methionine + phosphate + diphosphate</text>
        <dbReference type="Rhea" id="RHEA:21080"/>
        <dbReference type="ChEBI" id="CHEBI:15377"/>
        <dbReference type="ChEBI" id="CHEBI:30616"/>
        <dbReference type="ChEBI" id="CHEBI:33019"/>
        <dbReference type="ChEBI" id="CHEBI:43474"/>
        <dbReference type="ChEBI" id="CHEBI:57844"/>
        <dbReference type="ChEBI" id="CHEBI:59789"/>
        <dbReference type="EC" id="2.5.1.6"/>
    </reaction>
</comment>
<comment type="cofactor">
    <cofactor evidence="1">
        <name>Mg(2+)</name>
        <dbReference type="ChEBI" id="CHEBI:18420"/>
    </cofactor>
    <text evidence="1">Binds 2 divalent ions per subunit.</text>
</comment>
<comment type="cofactor">
    <cofactor evidence="1">
        <name>K(+)</name>
        <dbReference type="ChEBI" id="CHEBI:29103"/>
    </cofactor>
    <text evidence="1">Binds 1 potassium ion per subunit.</text>
</comment>
<comment type="pathway">
    <text evidence="1">Amino-acid biosynthesis; S-adenosyl-L-methionine biosynthesis; S-adenosyl-L-methionine from L-methionine: step 1/1.</text>
</comment>
<comment type="subunit">
    <text evidence="1">Homotetramer; dimer of dimers.</text>
</comment>
<comment type="subcellular location">
    <subcellularLocation>
        <location evidence="1">Cytoplasm</location>
    </subcellularLocation>
</comment>
<comment type="similarity">
    <text evidence="1">Belongs to the AdoMet synthase family.</text>
</comment>
<keyword id="KW-0067">ATP-binding</keyword>
<keyword id="KW-0963">Cytoplasm</keyword>
<keyword id="KW-0460">Magnesium</keyword>
<keyword id="KW-0479">Metal-binding</keyword>
<keyword id="KW-0547">Nucleotide-binding</keyword>
<keyword id="KW-0554">One-carbon metabolism</keyword>
<keyword id="KW-0630">Potassium</keyword>
<keyword id="KW-1185">Reference proteome</keyword>
<keyword id="KW-0808">Transferase</keyword>
<proteinExistence type="inferred from homology"/>
<protein>
    <recommendedName>
        <fullName evidence="1">S-adenosylmethionine synthase</fullName>
        <shortName evidence="1">AdoMet synthase</shortName>
        <ecNumber evidence="1">2.5.1.6</ecNumber>
    </recommendedName>
    <alternativeName>
        <fullName evidence="1">MAT</fullName>
    </alternativeName>
    <alternativeName>
        <fullName evidence="1">Methionine adenosyltransferase</fullName>
    </alternativeName>
</protein>
<evidence type="ECO:0000255" key="1">
    <source>
        <dbReference type="HAMAP-Rule" id="MF_00086"/>
    </source>
</evidence>
<accession>Q146W0</accession>
<name>METK_PARXL</name>
<feature type="chain" id="PRO_0000302902" description="S-adenosylmethionine synthase">
    <location>
        <begin position="1"/>
        <end position="396"/>
    </location>
</feature>
<feature type="region of interest" description="Flexible loop" evidence="1">
    <location>
        <begin position="100"/>
        <end position="110"/>
    </location>
</feature>
<feature type="binding site" description="in other chain" evidence="1">
    <location>
        <position position="16"/>
    </location>
    <ligand>
        <name>ATP</name>
        <dbReference type="ChEBI" id="CHEBI:30616"/>
        <note>ligand shared between two neighboring subunits</note>
    </ligand>
</feature>
<feature type="binding site" evidence="1">
    <location>
        <position position="18"/>
    </location>
    <ligand>
        <name>Mg(2+)</name>
        <dbReference type="ChEBI" id="CHEBI:18420"/>
    </ligand>
</feature>
<feature type="binding site" evidence="1">
    <location>
        <position position="44"/>
    </location>
    <ligand>
        <name>K(+)</name>
        <dbReference type="ChEBI" id="CHEBI:29103"/>
    </ligand>
</feature>
<feature type="binding site" description="in other chain" evidence="1">
    <location>
        <position position="57"/>
    </location>
    <ligand>
        <name>L-methionine</name>
        <dbReference type="ChEBI" id="CHEBI:57844"/>
        <note>ligand shared between two neighboring subunits</note>
    </ligand>
</feature>
<feature type="binding site" description="in other chain" evidence="1">
    <location>
        <position position="100"/>
    </location>
    <ligand>
        <name>L-methionine</name>
        <dbReference type="ChEBI" id="CHEBI:57844"/>
        <note>ligand shared between two neighboring subunits</note>
    </ligand>
</feature>
<feature type="binding site" description="in other chain" evidence="1">
    <location>
        <begin position="167"/>
        <end position="169"/>
    </location>
    <ligand>
        <name>ATP</name>
        <dbReference type="ChEBI" id="CHEBI:30616"/>
        <note>ligand shared between two neighboring subunits</note>
    </ligand>
</feature>
<feature type="binding site" description="in other chain" evidence="1">
    <location>
        <begin position="233"/>
        <end position="234"/>
    </location>
    <ligand>
        <name>ATP</name>
        <dbReference type="ChEBI" id="CHEBI:30616"/>
        <note>ligand shared between two neighboring subunits</note>
    </ligand>
</feature>
<feature type="binding site" evidence="1">
    <location>
        <position position="242"/>
    </location>
    <ligand>
        <name>ATP</name>
        <dbReference type="ChEBI" id="CHEBI:30616"/>
        <note>ligand shared between two neighboring subunits</note>
    </ligand>
</feature>
<feature type="binding site" evidence="1">
    <location>
        <position position="242"/>
    </location>
    <ligand>
        <name>L-methionine</name>
        <dbReference type="ChEBI" id="CHEBI:57844"/>
        <note>ligand shared between two neighboring subunits</note>
    </ligand>
</feature>
<feature type="binding site" description="in other chain" evidence="1">
    <location>
        <begin position="248"/>
        <end position="249"/>
    </location>
    <ligand>
        <name>ATP</name>
        <dbReference type="ChEBI" id="CHEBI:30616"/>
        <note>ligand shared between two neighboring subunits</note>
    </ligand>
</feature>
<feature type="binding site" evidence="1">
    <location>
        <position position="265"/>
    </location>
    <ligand>
        <name>ATP</name>
        <dbReference type="ChEBI" id="CHEBI:30616"/>
        <note>ligand shared between two neighboring subunits</note>
    </ligand>
</feature>
<feature type="binding site" evidence="1">
    <location>
        <position position="269"/>
    </location>
    <ligand>
        <name>ATP</name>
        <dbReference type="ChEBI" id="CHEBI:30616"/>
        <note>ligand shared between two neighboring subunits</note>
    </ligand>
</feature>
<feature type="binding site" description="in other chain" evidence="1">
    <location>
        <position position="273"/>
    </location>
    <ligand>
        <name>L-methionine</name>
        <dbReference type="ChEBI" id="CHEBI:57844"/>
        <note>ligand shared between two neighboring subunits</note>
    </ligand>
</feature>
<sequence>MANDYLFTSESVSEGHPDKVADQISDAILDAILAQDKYSRVAAETLCNTGLVVLAGEITTTANVDYIQVARNTIKRIGYDNTDYGIDYRGCAVLVAYDKQSPDIAQGVDRAHDNNLDQGAGDQGLMFGYACEETPELMPLPIHLSHRLVERQANLRRDGRLPWLRPDAKSQVTVRYVDGKPHSIDTVVLSTQHSPDIDLGTLREAVIEEVIKPTLPADLIKGDIKFLVNPTGRFVIGGPQGDCGLTGRKIIVDTYGGAAPHGGGAFSGKDPSKVDRSAAYAGRYVAKNIVAAGLASRCLIQVSYAIGVAQPTSVMVNTFGTGRVSDAVITRLVQEHFDLRPKGIIQMLDLLRPIYEKSAAYGHFGREEPEFTWESTDKALALAEAAGTEPVAALAE</sequence>
<dbReference type="EC" id="2.5.1.6" evidence="1"/>
<dbReference type="EMBL" id="CP000270">
    <property type="protein sequence ID" value="ABE28629.1"/>
    <property type="molecule type" value="Genomic_DNA"/>
</dbReference>
<dbReference type="RefSeq" id="WP_011486481.1">
    <property type="nucleotide sequence ID" value="NC_007951.1"/>
</dbReference>
<dbReference type="SMR" id="Q146W0"/>
<dbReference type="STRING" id="266265.Bxe_A4371"/>
<dbReference type="KEGG" id="bxb:DR64_2048"/>
<dbReference type="KEGG" id="bxe:Bxe_A4371"/>
<dbReference type="PATRIC" id="fig|266265.5.peg.95"/>
<dbReference type="eggNOG" id="COG0192">
    <property type="taxonomic scope" value="Bacteria"/>
</dbReference>
<dbReference type="OrthoDB" id="9801686at2"/>
<dbReference type="UniPathway" id="UPA00315">
    <property type="reaction ID" value="UER00080"/>
</dbReference>
<dbReference type="Proteomes" id="UP000001817">
    <property type="component" value="Chromosome 1"/>
</dbReference>
<dbReference type="GO" id="GO:0005737">
    <property type="term" value="C:cytoplasm"/>
    <property type="evidence" value="ECO:0007669"/>
    <property type="project" value="UniProtKB-SubCell"/>
</dbReference>
<dbReference type="GO" id="GO:0005524">
    <property type="term" value="F:ATP binding"/>
    <property type="evidence" value="ECO:0007669"/>
    <property type="project" value="UniProtKB-UniRule"/>
</dbReference>
<dbReference type="GO" id="GO:0000287">
    <property type="term" value="F:magnesium ion binding"/>
    <property type="evidence" value="ECO:0007669"/>
    <property type="project" value="UniProtKB-UniRule"/>
</dbReference>
<dbReference type="GO" id="GO:0004478">
    <property type="term" value="F:methionine adenosyltransferase activity"/>
    <property type="evidence" value="ECO:0007669"/>
    <property type="project" value="UniProtKB-UniRule"/>
</dbReference>
<dbReference type="GO" id="GO:0006730">
    <property type="term" value="P:one-carbon metabolic process"/>
    <property type="evidence" value="ECO:0007669"/>
    <property type="project" value="UniProtKB-KW"/>
</dbReference>
<dbReference type="GO" id="GO:0006556">
    <property type="term" value="P:S-adenosylmethionine biosynthetic process"/>
    <property type="evidence" value="ECO:0007669"/>
    <property type="project" value="UniProtKB-UniRule"/>
</dbReference>
<dbReference type="CDD" id="cd18079">
    <property type="entry name" value="S-AdoMet_synt"/>
    <property type="match status" value="1"/>
</dbReference>
<dbReference type="FunFam" id="3.30.300.10:FF:000003">
    <property type="entry name" value="S-adenosylmethionine synthase"/>
    <property type="match status" value="1"/>
</dbReference>
<dbReference type="FunFam" id="3.30.300.10:FF:000004">
    <property type="entry name" value="S-adenosylmethionine synthase"/>
    <property type="match status" value="1"/>
</dbReference>
<dbReference type="Gene3D" id="3.30.300.10">
    <property type="match status" value="3"/>
</dbReference>
<dbReference type="HAMAP" id="MF_00086">
    <property type="entry name" value="S_AdoMet_synth1"/>
    <property type="match status" value="1"/>
</dbReference>
<dbReference type="InterPro" id="IPR022631">
    <property type="entry name" value="ADOMET_SYNTHASE_CS"/>
</dbReference>
<dbReference type="InterPro" id="IPR022630">
    <property type="entry name" value="S-AdoMet_synt_C"/>
</dbReference>
<dbReference type="InterPro" id="IPR022629">
    <property type="entry name" value="S-AdoMet_synt_central"/>
</dbReference>
<dbReference type="InterPro" id="IPR022628">
    <property type="entry name" value="S-AdoMet_synt_N"/>
</dbReference>
<dbReference type="InterPro" id="IPR002133">
    <property type="entry name" value="S-AdoMet_synthetase"/>
</dbReference>
<dbReference type="InterPro" id="IPR022636">
    <property type="entry name" value="S-AdoMet_synthetase_sfam"/>
</dbReference>
<dbReference type="NCBIfam" id="TIGR01034">
    <property type="entry name" value="metK"/>
    <property type="match status" value="1"/>
</dbReference>
<dbReference type="PANTHER" id="PTHR11964">
    <property type="entry name" value="S-ADENOSYLMETHIONINE SYNTHETASE"/>
    <property type="match status" value="1"/>
</dbReference>
<dbReference type="Pfam" id="PF02773">
    <property type="entry name" value="S-AdoMet_synt_C"/>
    <property type="match status" value="1"/>
</dbReference>
<dbReference type="Pfam" id="PF02772">
    <property type="entry name" value="S-AdoMet_synt_M"/>
    <property type="match status" value="1"/>
</dbReference>
<dbReference type="Pfam" id="PF00438">
    <property type="entry name" value="S-AdoMet_synt_N"/>
    <property type="match status" value="1"/>
</dbReference>
<dbReference type="PIRSF" id="PIRSF000497">
    <property type="entry name" value="MAT"/>
    <property type="match status" value="1"/>
</dbReference>
<dbReference type="SUPFAM" id="SSF55973">
    <property type="entry name" value="S-adenosylmethionine synthetase"/>
    <property type="match status" value="3"/>
</dbReference>
<dbReference type="PROSITE" id="PS00376">
    <property type="entry name" value="ADOMET_SYNTHASE_1"/>
    <property type="match status" value="1"/>
</dbReference>
<dbReference type="PROSITE" id="PS00377">
    <property type="entry name" value="ADOMET_SYNTHASE_2"/>
    <property type="match status" value="1"/>
</dbReference>